<comment type="function">
    <text evidence="2">Acts as a suppressor of RNA-mediated gene silencing, also known as post-transcriptional gene silencing (PTGS), a mechanism of plant viral defense that limits the accumulation of viral RNAs.</text>
</comment>
<comment type="similarity">
    <text evidence="3">Belongs to the tymoviridae protein p69 family.</text>
</comment>
<protein>
    <recommendedName>
        <fullName>69 kDa protein</fullName>
    </recommendedName>
    <alternativeName>
        <fullName>p69</fullName>
    </alternativeName>
</protein>
<accession>P10357</accession>
<dbReference type="EMBL" id="X07441">
    <property type="protein sequence ID" value="CAA30321.1"/>
    <property type="status" value="ALT_SEQ"/>
    <property type="molecule type" value="Genomic_RNA"/>
</dbReference>
<dbReference type="PIR" id="S01955">
    <property type="entry name" value="S01955"/>
</dbReference>
<dbReference type="RefSeq" id="NP_663296.1">
    <property type="nucleotide sequence ID" value="NC_004063.1"/>
</dbReference>
<dbReference type="GeneID" id="951156"/>
<dbReference type="KEGG" id="vg:951156"/>
<dbReference type="OrthoDB" id="19242at10239"/>
<dbReference type="Proteomes" id="UP000000401">
    <property type="component" value="Genome"/>
</dbReference>
<dbReference type="GO" id="GO:0052170">
    <property type="term" value="P:symbiont-mediated suppression of host innate immune response"/>
    <property type="evidence" value="ECO:0007669"/>
    <property type="project" value="UniProtKB-KW"/>
</dbReference>
<dbReference type="InterPro" id="IPR004935">
    <property type="entry name" value="45/70kDa_tymovirus"/>
</dbReference>
<dbReference type="Pfam" id="PF03251">
    <property type="entry name" value="Tymo_45kd_70kd"/>
    <property type="match status" value="1"/>
</dbReference>
<evidence type="ECO:0000256" key="1">
    <source>
        <dbReference type="SAM" id="MobiDB-lite"/>
    </source>
</evidence>
<evidence type="ECO:0000269" key="2">
    <source>
    </source>
</evidence>
<evidence type="ECO:0000305" key="3"/>
<keyword id="KW-0945">Host-virus interaction</keyword>
<keyword id="KW-1090">Inhibition of host innate immune response by virus</keyword>
<keyword id="KW-1185">Reference proteome</keyword>
<keyword id="KW-0941">Suppressor of RNA silencing</keyword>
<keyword id="KW-0899">Viral immunoevasion</keyword>
<organismHost>
    <name type="scientific">Brassica</name>
    <dbReference type="NCBI Taxonomy" id="3705"/>
</organismHost>
<organismHost>
    <name type="scientific">Brassica rapa subsp. pekinensis</name>
    <name type="common">Chinese cabbage</name>
    <name type="synonym">Brassica pekinensis</name>
    <dbReference type="NCBI Taxonomy" id="51351"/>
</organismHost>
<organismHost>
    <name type="scientific">Cardamine lilacina</name>
    <dbReference type="NCBI Taxonomy" id="82359"/>
</organismHost>
<reference key="1">
    <citation type="journal article" date="1988" name="Nucleic Acids Res.">
        <title>Overlapping open reading frames revealed by complete nucleotide sequencing of turnip yellow mosaic virus genomic RNA.</title>
        <authorList>
            <person name="Morch M.D."/>
            <person name="Boyer J.C."/>
            <person name="Haenni A.L."/>
        </authorList>
    </citation>
    <scope>NUCLEOTIDE SEQUENCE [GENOMIC RNA]</scope>
</reference>
<reference key="2">
    <citation type="journal article" date="2004" name="Plant Cell">
        <title>Viral virulence protein suppresses RNA silencing-mediated defense but upregulates the role of microrna in host gene expression.</title>
        <authorList>
            <person name="Chen J."/>
            <person name="Li W.X."/>
            <person name="Xie D."/>
            <person name="Peng J.R."/>
            <person name="Ding S.W."/>
        </authorList>
    </citation>
    <scope>FUNCTION</scope>
    <source>
        <strain>Blue Lake</strain>
    </source>
</reference>
<sequence length="628" mass="69195">MSNGLPISIGRPCTHDSQRSLSAPDSRIHSGFNSLLDTDLPMVHSEGTSTPTQLLRHPNIWFGNLPPPPRRPQDNRDFSPLHPLVFPGHHSQLRHVHETQQVQQTCPGKLKLSGAEELPPAPQRQHSLPLHITRPSRFPHHFHARRPDVLPSVPDHGPVLTETKPRTSVRQPRSATRGPSFRPILLPKVVHVHDDPPHSSLRPRGSRSRQLQPTVRRPLLAPNQFHSPRQPPPLSDDPGILGPRPLAPHSTRDPPPRPITPGPSNTHDLRPLSVLPRTSPRRGLLPNPRRHRTSTGHIPPTTTSRPTGPPSRLQRPVHLYQSSPHTPNFRPSSIRKDALLQTGPRLGHLERLGQPANLRTSERSPPTKRRLPRSSEPNRLPKPLPEATLAPSYRHRRPYPLLPNPPAALPSIAYTSSRGKIHHSLPKGALPKEGAPPPPRRLPSPAPRPQLPLRDLGRTPGFPTPPKTPTRTPESRITASPTDIAPLDSDPVLSVRTEVHAPERRTFMDPEALRSALASLPSPPRSVGIIHTAPQTVLPANPPSPTRHLPPTSPPWILQSPVGEDAIVDSEDDSISSFHSHDFDSPSGPLRSQSPSRFRLHLRSPSTSSGIEPWSPASYDYGSAPDTD</sequence>
<organism>
    <name type="scientific">Turnip yellow mosaic virus</name>
    <dbReference type="NCBI Taxonomy" id="12154"/>
    <lineage>
        <taxon>Viruses</taxon>
        <taxon>Riboviria</taxon>
        <taxon>Orthornavirae</taxon>
        <taxon>Kitrinoviricota</taxon>
        <taxon>Alsuviricetes</taxon>
        <taxon>Tymovirales</taxon>
        <taxon>Tymoviridae</taxon>
        <taxon>Tymovirus</taxon>
        <taxon>Tymovirus brassicae</taxon>
    </lineage>
</organism>
<name>P69_TYMV</name>
<feature type="chain" id="PRO_0000222943" description="69 kDa protein">
    <location>
        <begin position="1"/>
        <end position="628"/>
    </location>
</feature>
<feature type="region of interest" description="Disordered" evidence="1">
    <location>
        <begin position="1"/>
        <end position="25"/>
    </location>
</feature>
<feature type="region of interest" description="Disordered" evidence="1">
    <location>
        <begin position="141"/>
        <end position="332"/>
    </location>
</feature>
<feature type="region of interest" description="Disordered" evidence="1">
    <location>
        <begin position="346"/>
        <end position="404"/>
    </location>
</feature>
<feature type="region of interest" description="Disordered" evidence="1">
    <location>
        <begin position="418"/>
        <end position="493"/>
    </location>
</feature>
<feature type="region of interest" description="Disordered" evidence="1">
    <location>
        <begin position="535"/>
        <end position="628"/>
    </location>
</feature>
<feature type="compositionally biased region" description="Low complexity" evidence="1">
    <location>
        <begin position="299"/>
        <end position="312"/>
    </location>
</feature>
<feature type="compositionally biased region" description="Polar residues" evidence="1">
    <location>
        <begin position="320"/>
        <end position="331"/>
    </location>
</feature>
<feature type="compositionally biased region" description="Pro residues" evidence="1">
    <location>
        <begin position="434"/>
        <end position="450"/>
    </location>
</feature>
<proteinExistence type="inferred from homology"/>